<protein>
    <recommendedName>
        <fullName evidence="1">Recombination-associated protein RdgC</fullName>
    </recommendedName>
</protein>
<sequence>MWFKNLQLHHLPAPWAVTPDQMEKWLAPHAFQPGSSVEMQRVGWASPRDDGALVYSINRQMLLLFRAEKKLLPASVVNQVTKARALEVEEQQGFKVGRKQLRELKEQVTDELLPRAFSIRRDTRVWIDTANGWLVIDAAAQALADDVRSLLVKSIDPLPLAGVHVARSPVAAMTDWLLSGEAPGGFTVDQDAELRSSDQGGATVRYVGHALEANDMRRHIETGKQCTRLAMTWNDRISFVLTPSLTIKRVTPLDVIKEAADPTAQNDDERFDSDFTLMTGELGRMLTDLVDILGGDRHDSIHQAAA</sequence>
<organism>
    <name type="scientific">Burkholderia ambifaria (strain MC40-6)</name>
    <dbReference type="NCBI Taxonomy" id="398577"/>
    <lineage>
        <taxon>Bacteria</taxon>
        <taxon>Pseudomonadati</taxon>
        <taxon>Pseudomonadota</taxon>
        <taxon>Betaproteobacteria</taxon>
        <taxon>Burkholderiales</taxon>
        <taxon>Burkholderiaceae</taxon>
        <taxon>Burkholderia</taxon>
        <taxon>Burkholderia cepacia complex</taxon>
    </lineage>
</organism>
<gene>
    <name evidence="1" type="primary">rdgC</name>
    <name type="ordered locus">BamMC406_4318</name>
</gene>
<name>RDGC_BURA4</name>
<comment type="function">
    <text evidence="1">May be involved in recombination.</text>
</comment>
<comment type="subcellular location">
    <subcellularLocation>
        <location evidence="1">Cytoplasm</location>
        <location evidence="1">Nucleoid</location>
    </subcellularLocation>
</comment>
<comment type="similarity">
    <text evidence="1">Belongs to the RdgC family.</text>
</comment>
<keyword id="KW-0963">Cytoplasm</keyword>
<keyword id="KW-0233">DNA recombination</keyword>
<feature type="chain" id="PRO_1000099055" description="Recombination-associated protein RdgC">
    <location>
        <begin position="1"/>
        <end position="306"/>
    </location>
</feature>
<evidence type="ECO:0000255" key="1">
    <source>
        <dbReference type="HAMAP-Rule" id="MF_00194"/>
    </source>
</evidence>
<proteinExistence type="inferred from homology"/>
<dbReference type="EMBL" id="CP001026">
    <property type="protein sequence ID" value="ACB66780.1"/>
    <property type="molecule type" value="Genomic_DNA"/>
</dbReference>
<dbReference type="RefSeq" id="WP_012366100.1">
    <property type="nucleotide sequence ID" value="NC_010552.1"/>
</dbReference>
<dbReference type="SMR" id="B1YWR8"/>
<dbReference type="KEGG" id="bac:BamMC406_4318"/>
<dbReference type="HOGENOM" id="CLU_052038_0_1_4"/>
<dbReference type="OrthoDB" id="5290530at2"/>
<dbReference type="Proteomes" id="UP000001680">
    <property type="component" value="Chromosome 2"/>
</dbReference>
<dbReference type="GO" id="GO:0043590">
    <property type="term" value="C:bacterial nucleoid"/>
    <property type="evidence" value="ECO:0007669"/>
    <property type="project" value="TreeGrafter"/>
</dbReference>
<dbReference type="GO" id="GO:0005737">
    <property type="term" value="C:cytoplasm"/>
    <property type="evidence" value="ECO:0007669"/>
    <property type="project" value="UniProtKB-UniRule"/>
</dbReference>
<dbReference type="GO" id="GO:0003690">
    <property type="term" value="F:double-stranded DNA binding"/>
    <property type="evidence" value="ECO:0007669"/>
    <property type="project" value="TreeGrafter"/>
</dbReference>
<dbReference type="GO" id="GO:0006310">
    <property type="term" value="P:DNA recombination"/>
    <property type="evidence" value="ECO:0007669"/>
    <property type="project" value="UniProtKB-UniRule"/>
</dbReference>
<dbReference type="GO" id="GO:0000018">
    <property type="term" value="P:regulation of DNA recombination"/>
    <property type="evidence" value="ECO:0007669"/>
    <property type="project" value="TreeGrafter"/>
</dbReference>
<dbReference type="HAMAP" id="MF_00194">
    <property type="entry name" value="RdgC"/>
    <property type="match status" value="1"/>
</dbReference>
<dbReference type="InterPro" id="IPR007476">
    <property type="entry name" value="RdgC"/>
</dbReference>
<dbReference type="NCBIfam" id="NF001463">
    <property type="entry name" value="PRK00321.1-4"/>
    <property type="match status" value="1"/>
</dbReference>
<dbReference type="NCBIfam" id="NF001464">
    <property type="entry name" value="PRK00321.1-5"/>
    <property type="match status" value="1"/>
</dbReference>
<dbReference type="PANTHER" id="PTHR38103">
    <property type="entry name" value="RECOMBINATION-ASSOCIATED PROTEIN RDGC"/>
    <property type="match status" value="1"/>
</dbReference>
<dbReference type="PANTHER" id="PTHR38103:SF1">
    <property type="entry name" value="RECOMBINATION-ASSOCIATED PROTEIN RDGC"/>
    <property type="match status" value="1"/>
</dbReference>
<dbReference type="Pfam" id="PF04381">
    <property type="entry name" value="RdgC"/>
    <property type="match status" value="1"/>
</dbReference>
<accession>B1YWR8</accession>
<reference key="1">
    <citation type="submission" date="2008-04" db="EMBL/GenBank/DDBJ databases">
        <title>Complete sequence of chromosome 2 of Burkholderia ambifaria MC40-6.</title>
        <authorList>
            <person name="Copeland A."/>
            <person name="Lucas S."/>
            <person name="Lapidus A."/>
            <person name="Glavina del Rio T."/>
            <person name="Dalin E."/>
            <person name="Tice H."/>
            <person name="Pitluck S."/>
            <person name="Chain P."/>
            <person name="Malfatti S."/>
            <person name="Shin M."/>
            <person name="Vergez L."/>
            <person name="Lang D."/>
            <person name="Schmutz J."/>
            <person name="Larimer F."/>
            <person name="Land M."/>
            <person name="Hauser L."/>
            <person name="Kyrpides N."/>
            <person name="Lykidis A."/>
            <person name="Ramette A."/>
            <person name="Konstantinidis K."/>
            <person name="Tiedje J."/>
            <person name="Richardson P."/>
        </authorList>
    </citation>
    <scope>NUCLEOTIDE SEQUENCE [LARGE SCALE GENOMIC DNA]</scope>
    <source>
        <strain>MC40-6</strain>
    </source>
</reference>